<feature type="chain" id="PRO_0000128420" description="Ribonuclease P protein subunit p29">
    <location>
        <begin position="1"/>
        <end position="220"/>
    </location>
</feature>
<feature type="modified residue" description="Phosphoserine" evidence="1">
    <location>
        <position position="10"/>
    </location>
</feature>
<proteinExistence type="evidence at transcript level"/>
<gene>
    <name type="primary">POP4</name>
    <name type="synonym">RPP29</name>
</gene>
<name>RPP29_PONAB</name>
<protein>
    <recommendedName>
        <fullName>Ribonuclease P protein subunit p29</fullName>
    </recommendedName>
</protein>
<evidence type="ECO:0000250" key="1">
    <source>
        <dbReference type="UniProtKB" id="O95707"/>
    </source>
</evidence>
<evidence type="ECO:0000305" key="2"/>
<reference key="1">
    <citation type="submission" date="2004-11" db="EMBL/GenBank/DDBJ databases">
        <authorList>
            <consortium name="The German cDNA consortium"/>
        </authorList>
    </citation>
    <scope>NUCLEOTIDE SEQUENCE [LARGE SCALE MRNA]</scope>
    <source>
        <tissue>Kidney</tissue>
    </source>
</reference>
<comment type="function">
    <text evidence="1">Component of ribonuclease P, a ribonucleoprotein complex that generates mature tRNA molecules by cleaving their 5'-ends.</text>
</comment>
<comment type="subunit">
    <text evidence="1">Component of nuclear RNase P and RNase MRP ribonucleoproteins. RNase P consists of a catalytic RNA moiety and 10 different protein chains; POP1, POP4, POP5, POP7, RPP14, RPP21, RPP25, RPP30, RPP38 and RPP40. Within the RNase P complex, POP1, POP7 and RPP25 form the 'finger' subcomplex, POP5, RPP14, RPP40 and homodimeric RPP30 form the 'palm' subcomplex, and RPP21, POP4 and RPP38 form the 'wrist' subcomplex. All subunits of the RNase P complex interact with the catalytic RNA. Several subunits of RNase P are also part of the RNase MRP complex. RNase MRP consists of a catalytic RNA moiety and about 8 protein subunits; POP1, POP7, RPP25, RPP30, RPP38, RPP40 and possibly also POP4 and POP5.</text>
</comment>
<comment type="subcellular location">
    <subcellularLocation>
        <location evidence="1">Nucleus</location>
        <location evidence="1">Nucleolus</location>
    </subcellularLocation>
</comment>
<comment type="similarity">
    <text evidence="2">Belongs to the eukaryotic/archaeal RNase P protein component 1 family.</text>
</comment>
<organism>
    <name type="scientific">Pongo abelii</name>
    <name type="common">Sumatran orangutan</name>
    <name type="synonym">Pongo pygmaeus abelii</name>
    <dbReference type="NCBI Taxonomy" id="9601"/>
    <lineage>
        <taxon>Eukaryota</taxon>
        <taxon>Metazoa</taxon>
        <taxon>Chordata</taxon>
        <taxon>Craniata</taxon>
        <taxon>Vertebrata</taxon>
        <taxon>Euteleostomi</taxon>
        <taxon>Mammalia</taxon>
        <taxon>Eutheria</taxon>
        <taxon>Euarchontoglires</taxon>
        <taxon>Primates</taxon>
        <taxon>Haplorrhini</taxon>
        <taxon>Catarrhini</taxon>
        <taxon>Hominidae</taxon>
        <taxon>Pongo</taxon>
    </lineage>
</organism>
<accession>Q5R7B0</accession>
<dbReference type="EMBL" id="CR860208">
    <property type="protein sequence ID" value="CAH92350.1"/>
    <property type="molecule type" value="mRNA"/>
</dbReference>
<dbReference type="RefSeq" id="NP_001126383.1">
    <property type="nucleotide sequence ID" value="NM_001132911.1"/>
</dbReference>
<dbReference type="SMR" id="Q5R7B0"/>
<dbReference type="FunCoup" id="Q5R7B0">
    <property type="interactions" value="1538"/>
</dbReference>
<dbReference type="STRING" id="9601.ENSPPYP00000010980"/>
<dbReference type="Ensembl" id="ENSPPYT00000011409.3">
    <property type="protein sequence ID" value="ENSPPYP00000010980.2"/>
    <property type="gene ID" value="ENSPPYG00000009805.3"/>
</dbReference>
<dbReference type="GeneID" id="100173364"/>
<dbReference type="KEGG" id="pon:100173364"/>
<dbReference type="CTD" id="10775"/>
<dbReference type="eggNOG" id="KOG4046">
    <property type="taxonomic scope" value="Eukaryota"/>
</dbReference>
<dbReference type="GeneTree" id="ENSGT00390000010067"/>
<dbReference type="HOGENOM" id="CLU_078577_2_1_1"/>
<dbReference type="InParanoid" id="Q5R7B0"/>
<dbReference type="OMA" id="IPKSECV"/>
<dbReference type="OrthoDB" id="124041at2759"/>
<dbReference type="TreeFam" id="TF313883"/>
<dbReference type="Proteomes" id="UP000001595">
    <property type="component" value="Chromosome 19"/>
</dbReference>
<dbReference type="GO" id="GO:0030681">
    <property type="term" value="C:multimeric ribonuclease P complex"/>
    <property type="evidence" value="ECO:0000250"/>
    <property type="project" value="UniProtKB"/>
</dbReference>
<dbReference type="GO" id="GO:0005730">
    <property type="term" value="C:nucleolus"/>
    <property type="evidence" value="ECO:0007669"/>
    <property type="project" value="UniProtKB-SubCell"/>
</dbReference>
<dbReference type="GO" id="GO:0005654">
    <property type="term" value="C:nucleoplasm"/>
    <property type="evidence" value="ECO:0007669"/>
    <property type="project" value="Ensembl"/>
</dbReference>
<dbReference type="GO" id="GO:0000172">
    <property type="term" value="C:ribonuclease MRP complex"/>
    <property type="evidence" value="ECO:0007669"/>
    <property type="project" value="InterPro"/>
</dbReference>
<dbReference type="GO" id="GO:0004526">
    <property type="term" value="F:ribonuclease P activity"/>
    <property type="evidence" value="ECO:0007669"/>
    <property type="project" value="UniProtKB-EC"/>
</dbReference>
<dbReference type="GO" id="GO:0033204">
    <property type="term" value="F:ribonuclease P RNA binding"/>
    <property type="evidence" value="ECO:0000250"/>
    <property type="project" value="UniProtKB"/>
</dbReference>
<dbReference type="GO" id="GO:0006364">
    <property type="term" value="P:rRNA processing"/>
    <property type="evidence" value="ECO:0007669"/>
    <property type="project" value="TreeGrafter"/>
</dbReference>
<dbReference type="GO" id="GO:0001682">
    <property type="term" value="P:tRNA 5'-leader removal"/>
    <property type="evidence" value="ECO:0000250"/>
    <property type="project" value="UniProtKB"/>
</dbReference>
<dbReference type="FunFam" id="2.30.30.210:FF:000001">
    <property type="entry name" value="Ribonuclease P protein subunit p29"/>
    <property type="match status" value="1"/>
</dbReference>
<dbReference type="Gene3D" id="2.30.30.210">
    <property type="entry name" value="Ribonuclease P/MRP, subunit p29"/>
    <property type="match status" value="1"/>
</dbReference>
<dbReference type="InterPro" id="IPR016848">
    <property type="entry name" value="RNase_P/MRP_Rpp29-subunit"/>
</dbReference>
<dbReference type="InterPro" id="IPR036980">
    <property type="entry name" value="RNase_P/MRP_Rpp29_sf"/>
</dbReference>
<dbReference type="InterPro" id="IPR023534">
    <property type="entry name" value="Rof/RNase_P-like"/>
</dbReference>
<dbReference type="InterPro" id="IPR002730">
    <property type="entry name" value="Rpp29/RNP1"/>
</dbReference>
<dbReference type="PANTHER" id="PTHR13348:SF0">
    <property type="entry name" value="RIBONUCLEASE P PROTEIN SUBUNIT P29"/>
    <property type="match status" value="1"/>
</dbReference>
<dbReference type="PANTHER" id="PTHR13348">
    <property type="entry name" value="RIBONUCLEASE P SUBUNIT P29"/>
    <property type="match status" value="1"/>
</dbReference>
<dbReference type="Pfam" id="PF01868">
    <property type="entry name" value="RNase_P-MRP_p29"/>
    <property type="match status" value="1"/>
</dbReference>
<dbReference type="PIRSF" id="PIRSF027081">
    <property type="entry name" value="RNase_P/MRP_p29_subunit"/>
    <property type="match status" value="1"/>
</dbReference>
<dbReference type="SMART" id="SM00538">
    <property type="entry name" value="POP4"/>
    <property type="match status" value="1"/>
</dbReference>
<dbReference type="SUPFAM" id="SSF101744">
    <property type="entry name" value="Rof/RNase P subunit-like"/>
    <property type="match status" value="1"/>
</dbReference>
<keyword id="KW-0539">Nucleus</keyword>
<keyword id="KW-0597">Phosphoprotein</keyword>
<keyword id="KW-1185">Reference proteome</keyword>
<keyword id="KW-0819">tRNA processing</keyword>
<sequence length="220" mass="25464">MKSVIYHALSQKEANDSDVQPSGAQRAEAFVRAFLKRSTPRMSPQAREDQLQRKAVVLEYFTRHKRKEKKKKAKGLSARQRRELRLFDIKPEQQRYSLFLPLHELWKQYIRDLCNGLKPDTQPQMIQAKLLKADLHGAIISVTKSKCPSYVGITGILLQETKHIFKIITKEDRLKVIPKLNCVFTVEIDGFISYIYGSKFQLRSSERSAKKFKAKGTIDL</sequence>